<sequence length="314" mass="35137">MFKEEDSLRKGQNVAAWKTLLAGAVSGLLARSITAPMDTIKIRLQLTPANGLKPFGSQVMEVARSMIKNEGIRSFWKGNIPGSLLYVTYGSAQFSSYSLFNRYLTPFGLEARLHSLVVGAFAGITSSIVSYPFDVLRTRLVANNQMHSMSITREVRDIWKLEGLPGFFKGSIASMTTITLTASIMFGTYETIRIYCDENEKTTAAHKKWELATLNHSAGTIGGVIAKIITFPLETIRRRMQFMNSKHLEKFSRHSSVYGSYKGYGFARIGLQILKQEGVSSLYRGILVALSKTIPTTFVSFWGYETAIHYLRMY</sequence>
<evidence type="ECO:0000255" key="1"/>
<evidence type="ECO:0000269" key="2">
    <source>
    </source>
</evidence>
<evidence type="ECO:0000269" key="3">
    <source>
    </source>
</evidence>
<evidence type="ECO:0000269" key="4">
    <source>
    </source>
</evidence>
<evidence type="ECO:0000305" key="5"/>
<name>TPC1_YEAST</name>
<dbReference type="EMBL" id="Z72881">
    <property type="protein sequence ID" value="CAA97099.1"/>
    <property type="molecule type" value="Genomic_DNA"/>
</dbReference>
<dbReference type="EMBL" id="AY693109">
    <property type="protein sequence ID" value="AAT93128.1"/>
    <property type="molecule type" value="Genomic_DNA"/>
</dbReference>
<dbReference type="EMBL" id="BK006941">
    <property type="protein sequence ID" value="DAA08189.1"/>
    <property type="molecule type" value="Genomic_DNA"/>
</dbReference>
<dbReference type="PIR" id="S64401">
    <property type="entry name" value="S64401"/>
</dbReference>
<dbReference type="RefSeq" id="NP_011610.3">
    <property type="nucleotide sequence ID" value="NM_001181225.3"/>
</dbReference>
<dbReference type="SMR" id="P53257"/>
<dbReference type="BioGRID" id="33339">
    <property type="interactions" value="36"/>
</dbReference>
<dbReference type="FunCoup" id="P53257">
    <property type="interactions" value="54"/>
</dbReference>
<dbReference type="IntAct" id="P53257">
    <property type="interactions" value="1"/>
</dbReference>
<dbReference type="MINT" id="P53257"/>
<dbReference type="STRING" id="4932.YGR096W"/>
<dbReference type="TCDB" id="2.A.29.28.1">
    <property type="family name" value="the mitochondrial carrier (mc) family"/>
</dbReference>
<dbReference type="PaxDb" id="4932-YGR096W"/>
<dbReference type="PeptideAtlas" id="P53257"/>
<dbReference type="EnsemblFungi" id="YGR096W_mRNA">
    <property type="protein sequence ID" value="YGR096W"/>
    <property type="gene ID" value="YGR096W"/>
</dbReference>
<dbReference type="GeneID" id="852988"/>
<dbReference type="KEGG" id="sce:YGR096W"/>
<dbReference type="AGR" id="SGD:S000003328"/>
<dbReference type="SGD" id="S000003328">
    <property type="gene designation" value="TPC1"/>
</dbReference>
<dbReference type="VEuPathDB" id="FungiDB:YGR096W"/>
<dbReference type="eggNOG" id="KOG0752">
    <property type="taxonomic scope" value="Eukaryota"/>
</dbReference>
<dbReference type="GeneTree" id="ENSGT00550000074902"/>
<dbReference type="HOGENOM" id="CLU_015166_10_3_1"/>
<dbReference type="InParanoid" id="P53257"/>
<dbReference type="OMA" id="MYVCYGA"/>
<dbReference type="OrthoDB" id="18574at2759"/>
<dbReference type="BioCyc" id="YEAST:G3O-30806-MONOMER"/>
<dbReference type="Reactome" id="R-SCE-196819">
    <property type="pathway name" value="Vitamin B1 (thiamin) metabolism"/>
</dbReference>
<dbReference type="SABIO-RK" id="P53257"/>
<dbReference type="BioGRID-ORCS" id="852988">
    <property type="hits" value="1 hit in 10 CRISPR screens"/>
</dbReference>
<dbReference type="PRO" id="PR:P53257"/>
<dbReference type="Proteomes" id="UP000002311">
    <property type="component" value="Chromosome VII"/>
</dbReference>
<dbReference type="RNAct" id="P53257">
    <property type="molecule type" value="protein"/>
</dbReference>
<dbReference type="GO" id="GO:0005743">
    <property type="term" value="C:mitochondrial inner membrane"/>
    <property type="evidence" value="ECO:0000314"/>
    <property type="project" value="SGD"/>
</dbReference>
<dbReference type="GO" id="GO:0090422">
    <property type="term" value="F:thiamine pyrophosphate transmembrane transporter activity"/>
    <property type="evidence" value="ECO:0000314"/>
    <property type="project" value="SGD"/>
</dbReference>
<dbReference type="GO" id="GO:0015234">
    <property type="term" value="F:thiamine transmembrane transporter activity"/>
    <property type="evidence" value="ECO:0000318"/>
    <property type="project" value="GO_Central"/>
</dbReference>
<dbReference type="GO" id="GO:1990545">
    <property type="term" value="P:mitochondrial thiamine pyrophosphate transmembrane transport"/>
    <property type="evidence" value="ECO:0000314"/>
    <property type="project" value="SGD"/>
</dbReference>
<dbReference type="GO" id="GO:0030974">
    <property type="term" value="P:thiamine pyrophosphate transmembrane transport"/>
    <property type="evidence" value="ECO:0000318"/>
    <property type="project" value="GO_Central"/>
</dbReference>
<dbReference type="FunFam" id="1.50.40.10:FF:000176">
    <property type="entry name" value="TPC1p Mitochondrial membrane transporter"/>
    <property type="match status" value="1"/>
</dbReference>
<dbReference type="Gene3D" id="1.50.40.10">
    <property type="entry name" value="Mitochondrial carrier domain"/>
    <property type="match status" value="1"/>
</dbReference>
<dbReference type="InterPro" id="IPR002067">
    <property type="entry name" value="Mit_carrier"/>
</dbReference>
<dbReference type="InterPro" id="IPR018108">
    <property type="entry name" value="Mitochondrial_sb/sol_carrier"/>
</dbReference>
<dbReference type="InterPro" id="IPR023395">
    <property type="entry name" value="Mt_carrier_dom_sf"/>
</dbReference>
<dbReference type="PANTHER" id="PTHR24089">
    <property type="entry name" value="SOLUTE CARRIER FAMILY 25"/>
    <property type="match status" value="1"/>
</dbReference>
<dbReference type="Pfam" id="PF00153">
    <property type="entry name" value="Mito_carr"/>
    <property type="match status" value="3"/>
</dbReference>
<dbReference type="PRINTS" id="PR00926">
    <property type="entry name" value="MITOCARRIER"/>
</dbReference>
<dbReference type="SUPFAM" id="SSF103506">
    <property type="entry name" value="Mitochondrial carrier"/>
    <property type="match status" value="1"/>
</dbReference>
<dbReference type="PROSITE" id="PS50920">
    <property type="entry name" value="SOLCAR"/>
    <property type="match status" value="3"/>
</dbReference>
<protein>
    <recommendedName>
        <fullName>Mitochondrial thiamine pyrophosphate carrier 1</fullName>
    </recommendedName>
</protein>
<feature type="chain" id="PRO_0000090696" description="Mitochondrial thiamine pyrophosphate carrier 1">
    <location>
        <begin position="1"/>
        <end position="314"/>
    </location>
</feature>
<feature type="transmembrane region" description="Helical; Name=1" evidence="1">
    <location>
        <begin position="14"/>
        <end position="30"/>
    </location>
</feature>
<feature type="transmembrane region" description="Helical; Name=2" evidence="1">
    <location>
        <begin position="84"/>
        <end position="100"/>
    </location>
</feature>
<feature type="transmembrane region" description="Helical; Name=3" evidence="1">
    <location>
        <begin position="116"/>
        <end position="136"/>
    </location>
</feature>
<feature type="transmembrane region" description="Helical; Name=4" evidence="1">
    <location>
        <begin position="170"/>
        <end position="186"/>
    </location>
</feature>
<feature type="transmembrane region" description="Helical; Name=5" evidence="1">
    <location>
        <begin position="217"/>
        <end position="233"/>
    </location>
</feature>
<feature type="transmembrane region" description="Helical; Name=6" evidence="1">
    <location>
        <begin position="285"/>
        <end position="302"/>
    </location>
</feature>
<feature type="repeat" description="Solcar 1">
    <location>
        <begin position="14"/>
        <end position="103"/>
    </location>
</feature>
<feature type="repeat" description="Solcar 2">
    <location>
        <begin position="110"/>
        <end position="195"/>
    </location>
</feature>
<feature type="repeat" description="Solcar 3">
    <location>
        <begin position="210"/>
        <end position="310"/>
    </location>
</feature>
<feature type="sequence conflict" description="In Ref. 3; AAT93128." evidence="5" ref="3">
    <original>M</original>
    <variation>T</variation>
    <location>
        <position position="66"/>
    </location>
</feature>
<gene>
    <name type="primary">TPC1</name>
    <name type="ordered locus">YGR096W</name>
</gene>
<proteinExistence type="evidence at protein level"/>
<comment type="function">
    <text evidence="2 3 4">Mitochondrial transporter that mediates uptake of thiamine pyrophosphate (ThPP) into mitochondria.</text>
</comment>
<comment type="biophysicochemical properties">
    <kinetics>
        <KM evidence="3">0.51 mM for dATP uptake by unloaded proteoliposomes</KM>
        <Vmax evidence="3">38.0 umol/min/g enzyme with dATP as substrate uptaken by unloaded proteoliposomes</Vmax>
    </kinetics>
</comment>
<comment type="subcellular location">
    <subcellularLocation>
        <location evidence="5">Mitochondrion inner membrane</location>
        <topology evidence="5">Multi-pass membrane protein</topology>
    </subcellularLocation>
</comment>
<comment type="induction">
    <text evidence="3">Expression is regulated by carbon source, with very low expression with succinate, acetate, ethanol or pyruvate as carbon source.</text>
</comment>
<comment type="similarity">
    <text evidence="5">Belongs to the mitochondrial carrier (TC 2.A.29) family.</text>
</comment>
<reference key="1">
    <citation type="journal article" date="1997" name="Nature">
        <title>The nucleotide sequence of Saccharomyces cerevisiae chromosome VII.</title>
        <authorList>
            <person name="Tettelin H."/>
            <person name="Agostoni-Carbone M.L."/>
            <person name="Albermann K."/>
            <person name="Albers M."/>
            <person name="Arroyo J."/>
            <person name="Backes U."/>
            <person name="Barreiros T."/>
            <person name="Bertani I."/>
            <person name="Bjourson A.J."/>
            <person name="Brueckner M."/>
            <person name="Bruschi C.V."/>
            <person name="Carignani G."/>
            <person name="Castagnoli L."/>
            <person name="Cerdan E."/>
            <person name="Clemente M.L."/>
            <person name="Coblenz A."/>
            <person name="Coglievina M."/>
            <person name="Coissac E."/>
            <person name="Defoor E."/>
            <person name="Del Bino S."/>
            <person name="Delius H."/>
            <person name="Delneri D."/>
            <person name="de Wergifosse P."/>
            <person name="Dujon B."/>
            <person name="Durand P."/>
            <person name="Entian K.-D."/>
            <person name="Eraso P."/>
            <person name="Escribano V."/>
            <person name="Fabiani L."/>
            <person name="Fartmann B."/>
            <person name="Feroli F."/>
            <person name="Feuermann M."/>
            <person name="Frontali L."/>
            <person name="Garcia-Gonzalez M."/>
            <person name="Garcia-Saez M.I."/>
            <person name="Goffeau A."/>
            <person name="Guerreiro P."/>
            <person name="Hani J."/>
            <person name="Hansen M."/>
            <person name="Hebling U."/>
            <person name="Hernandez K."/>
            <person name="Heumann K."/>
            <person name="Hilger F."/>
            <person name="Hofmann B."/>
            <person name="Indge K.J."/>
            <person name="James C.M."/>
            <person name="Klima R."/>
            <person name="Koetter P."/>
            <person name="Kramer B."/>
            <person name="Kramer W."/>
            <person name="Lauquin G."/>
            <person name="Leuther H."/>
            <person name="Louis E.J."/>
            <person name="Maillier E."/>
            <person name="Marconi A."/>
            <person name="Martegani E."/>
            <person name="Mazon M.J."/>
            <person name="Mazzoni C."/>
            <person name="McReynolds A.D.K."/>
            <person name="Melchioretto P."/>
            <person name="Mewes H.-W."/>
            <person name="Minenkova O."/>
            <person name="Mueller-Auer S."/>
            <person name="Nawrocki A."/>
            <person name="Netter P."/>
            <person name="Neu R."/>
            <person name="Nombela C."/>
            <person name="Oliver S.G."/>
            <person name="Panzeri L."/>
            <person name="Paoluzi S."/>
            <person name="Plevani P."/>
            <person name="Portetelle D."/>
            <person name="Portillo F."/>
            <person name="Potier S."/>
            <person name="Purnelle B."/>
            <person name="Rieger M."/>
            <person name="Riles L."/>
            <person name="Rinaldi T."/>
            <person name="Robben J."/>
            <person name="Rodrigues-Pousada C."/>
            <person name="Rodriguez-Belmonte E."/>
            <person name="Rodriguez-Torres A.M."/>
            <person name="Rose M."/>
            <person name="Ruzzi M."/>
            <person name="Saliola M."/>
            <person name="Sanchez-Perez M."/>
            <person name="Schaefer B."/>
            <person name="Schaefer M."/>
            <person name="Scharfe M."/>
            <person name="Schmidheini T."/>
            <person name="Schreer A."/>
            <person name="Skala J."/>
            <person name="Souciet J.-L."/>
            <person name="Steensma H.Y."/>
            <person name="Talla E."/>
            <person name="Thierry A."/>
            <person name="Vandenbol M."/>
            <person name="van der Aart Q.J.M."/>
            <person name="Van Dyck L."/>
            <person name="Vanoni M."/>
            <person name="Verhasselt P."/>
            <person name="Voet M."/>
            <person name="Volckaert G."/>
            <person name="Wambutt R."/>
            <person name="Watson M.D."/>
            <person name="Weber N."/>
            <person name="Wedler E."/>
            <person name="Wedler H."/>
            <person name="Wipfli P."/>
            <person name="Wolf K."/>
            <person name="Wright L.F."/>
            <person name="Zaccaria P."/>
            <person name="Zimmermann M."/>
            <person name="Zollner A."/>
            <person name="Kleine K."/>
        </authorList>
    </citation>
    <scope>NUCLEOTIDE SEQUENCE [LARGE SCALE GENOMIC DNA]</scope>
    <source>
        <strain>ATCC 204508 / S288c</strain>
    </source>
</reference>
<reference key="2">
    <citation type="journal article" date="2014" name="G3 (Bethesda)">
        <title>The reference genome sequence of Saccharomyces cerevisiae: Then and now.</title>
        <authorList>
            <person name="Engel S.R."/>
            <person name="Dietrich F.S."/>
            <person name="Fisk D.G."/>
            <person name="Binkley G."/>
            <person name="Balakrishnan R."/>
            <person name="Costanzo M.C."/>
            <person name="Dwight S.S."/>
            <person name="Hitz B.C."/>
            <person name="Karra K."/>
            <person name="Nash R.S."/>
            <person name="Weng S."/>
            <person name="Wong E.D."/>
            <person name="Lloyd P."/>
            <person name="Skrzypek M.S."/>
            <person name="Miyasato S.R."/>
            <person name="Simison M."/>
            <person name="Cherry J.M."/>
        </authorList>
    </citation>
    <scope>GENOME REANNOTATION</scope>
    <source>
        <strain>ATCC 204508 / S288c</strain>
    </source>
</reference>
<reference key="3">
    <citation type="journal article" date="2007" name="Genome Res.">
        <title>Approaching a complete repository of sequence-verified protein-encoding clones for Saccharomyces cerevisiae.</title>
        <authorList>
            <person name="Hu Y."/>
            <person name="Rolfs A."/>
            <person name="Bhullar B."/>
            <person name="Murthy T.V.S."/>
            <person name="Zhu C."/>
            <person name="Berger M.F."/>
            <person name="Camargo A.A."/>
            <person name="Kelley F."/>
            <person name="McCarron S."/>
            <person name="Jepson D."/>
            <person name="Richardson A."/>
            <person name="Raphael J."/>
            <person name="Moreira D."/>
            <person name="Taycher E."/>
            <person name="Zuo D."/>
            <person name="Mohr S."/>
            <person name="Kane M.F."/>
            <person name="Williamson J."/>
            <person name="Simpson A.J.G."/>
            <person name="Bulyk M.L."/>
            <person name="Harlow E."/>
            <person name="Marsischky G."/>
            <person name="Kolodner R.D."/>
            <person name="LaBaer J."/>
        </authorList>
    </citation>
    <scope>NUCLEOTIDE SEQUENCE [GENOMIC DNA]</scope>
    <source>
        <strain>ATCC 204508 / S288c</strain>
    </source>
</reference>
<reference key="4">
    <citation type="journal article" date="1997" name="Yeast">
        <title>Phylogenetic classification of the mitochondrial carrier family of Saccharomyces cerevisiae.</title>
        <authorList>
            <person name="el Moualij B."/>
            <person name="Duyckaerts C."/>
            <person name="Lamotte-Brasseur J."/>
            <person name="Sluse F.E."/>
        </authorList>
    </citation>
    <scope>FUNCTION</scope>
</reference>
<reference key="5">
    <citation type="journal article" date="2000" name="Biochim. Biophys. Acta">
        <title>The yeast mitochondrial transport proteins: new sequences and consensus residues, lack of direct relation between consensus residues and transmembrane helices, expression patterns of the transport protein genes, and protein-protein interactions with other proteins.</title>
        <authorList>
            <person name="Belenkiy R."/>
            <person name="Haefele A."/>
            <person name="Eisen M.B."/>
            <person name="Wohlrab H."/>
        </authorList>
    </citation>
    <scope>FUNCTION</scope>
</reference>
<reference key="6">
    <citation type="journal article" date="2002" name="EMBO J.">
        <title>Identification and reconstitution of the yeast mitochondrial transporter for thiamine pyrophosphate.</title>
        <authorList>
            <person name="Marobbio C.M.T."/>
            <person name="Vozza A."/>
            <person name="Harding M."/>
            <person name="Bisaccia F."/>
            <person name="Palmieri F."/>
            <person name="Walker J.E."/>
        </authorList>
    </citation>
    <scope>FUNCTION</scope>
    <scope>INDUCTION</scope>
    <scope>BIOPHYSICOCHEMICAL PROPERTIES</scope>
</reference>
<reference key="7">
    <citation type="journal article" date="2003" name="Nature">
        <title>Global analysis of protein localization in budding yeast.</title>
        <authorList>
            <person name="Huh W.-K."/>
            <person name="Falvo J.V."/>
            <person name="Gerke L.C."/>
            <person name="Carroll A.S."/>
            <person name="Howson R.W."/>
            <person name="Weissman J.S."/>
            <person name="O'Shea E.K."/>
        </authorList>
    </citation>
    <scope>SUBCELLULAR LOCATION [LARGE SCALE ANALYSIS]</scope>
</reference>
<reference key="8">
    <citation type="journal article" date="2012" name="Proc. Natl. Acad. Sci. U.S.A.">
        <title>N-terminal acetylome analyses and functional insights of the N-terminal acetyltransferase NatB.</title>
        <authorList>
            <person name="Van Damme P."/>
            <person name="Lasa M."/>
            <person name="Polevoda B."/>
            <person name="Gazquez C."/>
            <person name="Elosegui-Artola A."/>
            <person name="Kim D.S."/>
            <person name="De Juan-Pardo E."/>
            <person name="Demeyer K."/>
            <person name="Hole K."/>
            <person name="Larrea E."/>
            <person name="Timmerman E."/>
            <person name="Prieto J."/>
            <person name="Arnesen T."/>
            <person name="Sherman F."/>
            <person name="Gevaert K."/>
            <person name="Aldabe R."/>
        </authorList>
    </citation>
    <scope>IDENTIFICATION BY MASS SPECTROMETRY [LARGE SCALE ANALYSIS]</scope>
</reference>
<accession>P53257</accession>
<accession>D6VUM8</accession>
<accession>Q6B1H1</accession>
<organism>
    <name type="scientific">Saccharomyces cerevisiae (strain ATCC 204508 / S288c)</name>
    <name type="common">Baker's yeast</name>
    <dbReference type="NCBI Taxonomy" id="559292"/>
    <lineage>
        <taxon>Eukaryota</taxon>
        <taxon>Fungi</taxon>
        <taxon>Dikarya</taxon>
        <taxon>Ascomycota</taxon>
        <taxon>Saccharomycotina</taxon>
        <taxon>Saccharomycetes</taxon>
        <taxon>Saccharomycetales</taxon>
        <taxon>Saccharomycetaceae</taxon>
        <taxon>Saccharomyces</taxon>
    </lineage>
</organism>
<keyword id="KW-0472">Membrane</keyword>
<keyword id="KW-0496">Mitochondrion</keyword>
<keyword id="KW-0999">Mitochondrion inner membrane</keyword>
<keyword id="KW-1185">Reference proteome</keyword>
<keyword id="KW-0677">Repeat</keyword>
<keyword id="KW-0812">Transmembrane</keyword>
<keyword id="KW-1133">Transmembrane helix</keyword>
<keyword id="KW-0813">Transport</keyword>